<accession>B6I3G5</accession>
<comment type="function">
    <text evidence="1">Converts seryl-tRNA(Sec) to selenocysteinyl-tRNA(Sec) required for selenoprotein biosynthesis.</text>
</comment>
<comment type="catalytic activity">
    <reaction evidence="1">
        <text>L-seryl-tRNA(Sec) + selenophosphate + H(+) = L-selenocysteinyl-tRNA(Sec) + phosphate</text>
        <dbReference type="Rhea" id="RHEA:22728"/>
        <dbReference type="Rhea" id="RHEA-COMP:9742"/>
        <dbReference type="Rhea" id="RHEA-COMP:9743"/>
        <dbReference type="ChEBI" id="CHEBI:15378"/>
        <dbReference type="ChEBI" id="CHEBI:16144"/>
        <dbReference type="ChEBI" id="CHEBI:43474"/>
        <dbReference type="ChEBI" id="CHEBI:78533"/>
        <dbReference type="ChEBI" id="CHEBI:78573"/>
        <dbReference type="EC" id="2.9.1.1"/>
    </reaction>
</comment>
<comment type="cofactor">
    <cofactor evidence="1">
        <name>pyridoxal 5'-phosphate</name>
        <dbReference type="ChEBI" id="CHEBI:597326"/>
    </cofactor>
</comment>
<comment type="pathway">
    <text evidence="1">Aminoacyl-tRNA biosynthesis; selenocysteinyl-tRNA(Sec) biosynthesis; selenocysteinyl-tRNA(Sec) from L-seryl-tRNA(Sec) (bacterial route): step 1/1.</text>
</comment>
<comment type="subunit">
    <text evidence="1">Homodecamer; pentamer of dimers. Binds only one seryl-tRNA(Sec) per dimer.</text>
</comment>
<comment type="subcellular location">
    <subcellularLocation>
        <location evidence="1">Cytoplasm</location>
    </subcellularLocation>
</comment>
<comment type="similarity">
    <text evidence="1">Belongs to the SelA family.</text>
</comment>
<name>SELA_ECOSE</name>
<proteinExistence type="inferred from homology"/>
<reference key="1">
    <citation type="journal article" date="2008" name="DNA Res.">
        <title>Complete genome sequence and comparative analysis of the wild-type commensal Escherichia coli strain SE11 isolated from a healthy adult.</title>
        <authorList>
            <person name="Oshima K."/>
            <person name="Toh H."/>
            <person name="Ogura Y."/>
            <person name="Sasamoto H."/>
            <person name="Morita H."/>
            <person name="Park S.-H."/>
            <person name="Ooka T."/>
            <person name="Iyoda S."/>
            <person name="Taylor T.D."/>
            <person name="Hayashi T."/>
            <person name="Itoh K."/>
            <person name="Hattori M."/>
        </authorList>
    </citation>
    <scope>NUCLEOTIDE SEQUENCE [LARGE SCALE GENOMIC DNA]</scope>
    <source>
        <strain>SE11</strain>
    </source>
</reference>
<protein>
    <recommendedName>
        <fullName evidence="1">L-seryl-tRNA(Sec) selenium transferase</fullName>
        <ecNumber evidence="1">2.9.1.1</ecNumber>
    </recommendedName>
    <alternativeName>
        <fullName evidence="1">Selenocysteine synthase</fullName>
        <shortName evidence="1">Sec synthase</shortName>
    </alternativeName>
    <alternativeName>
        <fullName evidence="1">Selenocysteinyl-tRNA(Sec) synthase</fullName>
    </alternativeName>
</protein>
<feature type="chain" id="PRO_1000124142" description="L-seryl-tRNA(Sec) selenium transferase">
    <location>
        <begin position="1"/>
        <end position="463"/>
    </location>
</feature>
<feature type="modified residue" description="N6-(pyridoxal phosphate)lysine" evidence="1">
    <location>
        <position position="295"/>
    </location>
</feature>
<gene>
    <name evidence="1" type="primary">selA</name>
    <name type="ordered locus">ECSE_3868</name>
</gene>
<dbReference type="EC" id="2.9.1.1" evidence="1"/>
<dbReference type="EMBL" id="AP009240">
    <property type="protein sequence ID" value="BAG79392.1"/>
    <property type="molecule type" value="Genomic_DNA"/>
</dbReference>
<dbReference type="RefSeq" id="WP_000206275.1">
    <property type="nucleotide sequence ID" value="NC_011415.1"/>
</dbReference>
<dbReference type="SMR" id="B6I3G5"/>
<dbReference type="GeneID" id="75204641"/>
<dbReference type="KEGG" id="ecy:ECSE_3868"/>
<dbReference type="HOGENOM" id="CLU_038142_1_0_6"/>
<dbReference type="UniPathway" id="UPA00906">
    <property type="reaction ID" value="UER00896"/>
</dbReference>
<dbReference type="Proteomes" id="UP000008199">
    <property type="component" value="Chromosome"/>
</dbReference>
<dbReference type="GO" id="GO:0005737">
    <property type="term" value="C:cytoplasm"/>
    <property type="evidence" value="ECO:0007669"/>
    <property type="project" value="UniProtKB-SubCell"/>
</dbReference>
<dbReference type="GO" id="GO:0004125">
    <property type="term" value="F:L-seryl-tRNA(Sec) selenium transferase activity"/>
    <property type="evidence" value="ECO:0007669"/>
    <property type="project" value="UniProtKB-UniRule"/>
</dbReference>
<dbReference type="GO" id="GO:0001717">
    <property type="term" value="P:conversion of seryl-tRNAsec to selenocys-tRNAsec"/>
    <property type="evidence" value="ECO:0007669"/>
    <property type="project" value="UniProtKB-UniRule"/>
</dbReference>
<dbReference type="GO" id="GO:0001514">
    <property type="term" value="P:selenocysteine incorporation"/>
    <property type="evidence" value="ECO:0007669"/>
    <property type="project" value="UniProtKB-UniRule"/>
</dbReference>
<dbReference type="FunFam" id="3.40.640.10:FF:000028">
    <property type="entry name" value="L-seryl-tRNA(Sec) selenium transferase"/>
    <property type="match status" value="1"/>
</dbReference>
<dbReference type="FunFam" id="3.90.1150.180:FF:000001">
    <property type="entry name" value="L-seryl-tRNA(Sec) selenium transferase"/>
    <property type="match status" value="1"/>
</dbReference>
<dbReference type="Gene3D" id="3.90.1150.180">
    <property type="match status" value="1"/>
</dbReference>
<dbReference type="Gene3D" id="3.40.640.10">
    <property type="entry name" value="Type I PLP-dependent aspartate aminotransferase-like (Major domain)"/>
    <property type="match status" value="1"/>
</dbReference>
<dbReference type="HAMAP" id="MF_00423">
    <property type="entry name" value="SelA"/>
    <property type="match status" value="1"/>
</dbReference>
<dbReference type="InterPro" id="IPR015424">
    <property type="entry name" value="PyrdxlP-dep_Trfase"/>
</dbReference>
<dbReference type="InterPro" id="IPR015421">
    <property type="entry name" value="PyrdxlP-dep_Trfase_major"/>
</dbReference>
<dbReference type="InterPro" id="IPR018319">
    <property type="entry name" value="SelA-like"/>
</dbReference>
<dbReference type="InterPro" id="IPR004534">
    <property type="entry name" value="SelA_trans"/>
</dbReference>
<dbReference type="InterPro" id="IPR025862">
    <property type="entry name" value="SelA_trans_N_dom"/>
</dbReference>
<dbReference type="NCBIfam" id="TIGR00474">
    <property type="entry name" value="selA"/>
    <property type="match status" value="1"/>
</dbReference>
<dbReference type="PANTHER" id="PTHR32328">
    <property type="entry name" value="L-SERYL-TRNA(SEC) SELENIUM TRANSFERASE"/>
    <property type="match status" value="1"/>
</dbReference>
<dbReference type="PANTHER" id="PTHR32328:SF0">
    <property type="entry name" value="L-SERYL-TRNA(SEC) SELENIUM TRANSFERASE"/>
    <property type="match status" value="1"/>
</dbReference>
<dbReference type="Pfam" id="PF12390">
    <property type="entry name" value="Se-cys_synth_N"/>
    <property type="match status" value="1"/>
</dbReference>
<dbReference type="Pfam" id="PF03841">
    <property type="entry name" value="SelA"/>
    <property type="match status" value="1"/>
</dbReference>
<dbReference type="SUPFAM" id="SSF53383">
    <property type="entry name" value="PLP-dependent transferases"/>
    <property type="match status" value="1"/>
</dbReference>
<organism>
    <name type="scientific">Escherichia coli (strain SE11)</name>
    <dbReference type="NCBI Taxonomy" id="409438"/>
    <lineage>
        <taxon>Bacteria</taxon>
        <taxon>Pseudomonadati</taxon>
        <taxon>Pseudomonadota</taxon>
        <taxon>Gammaproteobacteria</taxon>
        <taxon>Enterobacterales</taxon>
        <taxon>Enterobacteriaceae</taxon>
        <taxon>Escherichia</taxon>
    </lineage>
</organism>
<sequence>MTTETRSLYSQLPAIDRLLRDSSFLSLRDTYGHTRVVELLRQMLDEAREVIRGSQTLPAWCENWAQEVDARLTKEAQSALRPVINLTGTVLHTNLGRALQAEAAVEAVAQAMRSPVTLEYDLDDAGRGHRDRALAQLLCRITGAEDACIVNNNAAAVLLMLAATASGKEVVVSRGELVEIGGAFRIPDVMRQAGCTLHEVGTTNRTHANDYRQAVNENTALLMKVHTSNYSIQGFTKAIDEAELVALGKELDVPVVTDLGSGSLVDLSQYGLPKEPMPQELIAAGVSLVSFSGDKLLGGPQAGIIVGKKEMIARLQSHPLKRALRADKMTLAALEATLRLYLHPEALSEKLPTLRLLTRSAEVIQIQAQRLQAPLAAHYGAEFAVQVMPCLSQIGSGSLPVDRLPSAALTFTPHDGRGSHLESLAARWRELPVPVIGRIYDGRLWLDLRCLEDEQRFLEMLLK</sequence>
<keyword id="KW-0963">Cytoplasm</keyword>
<keyword id="KW-0648">Protein biosynthesis</keyword>
<keyword id="KW-0663">Pyridoxal phosphate</keyword>
<keyword id="KW-0711">Selenium</keyword>
<keyword id="KW-0808">Transferase</keyword>
<evidence type="ECO:0000255" key="1">
    <source>
        <dbReference type="HAMAP-Rule" id="MF_00423"/>
    </source>
</evidence>